<organism>
    <name type="scientific">Escherichia coli O6:H1 (strain CFT073 / ATCC 700928 / UPEC)</name>
    <dbReference type="NCBI Taxonomy" id="199310"/>
    <lineage>
        <taxon>Bacteria</taxon>
        <taxon>Pseudomonadati</taxon>
        <taxon>Pseudomonadota</taxon>
        <taxon>Gammaproteobacteria</taxon>
        <taxon>Enterobacterales</taxon>
        <taxon>Enterobacteriaceae</taxon>
        <taxon>Escherichia</taxon>
    </lineage>
</organism>
<gene>
    <name evidence="2" type="primary">orn</name>
    <name type="ordered locus">c5249</name>
</gene>
<dbReference type="EC" id="3.1.15.-" evidence="2"/>
<dbReference type="EMBL" id="AE014075">
    <property type="protein sequence ID" value="AAN83671.1"/>
    <property type="status" value="ALT_INIT"/>
    <property type="molecule type" value="Genomic_DNA"/>
</dbReference>
<dbReference type="RefSeq" id="WP_001295188.1">
    <property type="nucleotide sequence ID" value="NZ_CP051263.1"/>
</dbReference>
<dbReference type="SMR" id="P0A785"/>
<dbReference type="STRING" id="199310.c5249"/>
<dbReference type="GeneID" id="93777660"/>
<dbReference type="KEGG" id="ecc:c5249"/>
<dbReference type="eggNOG" id="COG1949">
    <property type="taxonomic scope" value="Bacteria"/>
</dbReference>
<dbReference type="HOGENOM" id="CLU_064761_2_0_6"/>
<dbReference type="Proteomes" id="UP000001410">
    <property type="component" value="Chromosome"/>
</dbReference>
<dbReference type="GO" id="GO:0005737">
    <property type="term" value="C:cytoplasm"/>
    <property type="evidence" value="ECO:0007669"/>
    <property type="project" value="UniProtKB-SubCell"/>
</dbReference>
<dbReference type="GO" id="GO:0000175">
    <property type="term" value="F:3'-5'-RNA exonuclease activity"/>
    <property type="evidence" value="ECO:0007669"/>
    <property type="project" value="InterPro"/>
</dbReference>
<dbReference type="GO" id="GO:0003676">
    <property type="term" value="F:nucleic acid binding"/>
    <property type="evidence" value="ECO:0007669"/>
    <property type="project" value="InterPro"/>
</dbReference>
<dbReference type="GO" id="GO:0006259">
    <property type="term" value="P:DNA metabolic process"/>
    <property type="evidence" value="ECO:0007669"/>
    <property type="project" value="UniProtKB-ARBA"/>
</dbReference>
<dbReference type="CDD" id="cd06135">
    <property type="entry name" value="Orn"/>
    <property type="match status" value="1"/>
</dbReference>
<dbReference type="FunFam" id="3.30.420.10:FF:000003">
    <property type="entry name" value="Oligoribonuclease"/>
    <property type="match status" value="1"/>
</dbReference>
<dbReference type="Gene3D" id="3.30.420.10">
    <property type="entry name" value="Ribonuclease H-like superfamily/Ribonuclease H"/>
    <property type="match status" value="1"/>
</dbReference>
<dbReference type="HAMAP" id="MF_00045">
    <property type="entry name" value="Oligoribonuclease"/>
    <property type="match status" value="1"/>
</dbReference>
<dbReference type="InterPro" id="IPR013520">
    <property type="entry name" value="Exonuclease_RNaseT/DNA_pol3"/>
</dbReference>
<dbReference type="InterPro" id="IPR022894">
    <property type="entry name" value="Oligoribonuclease"/>
</dbReference>
<dbReference type="InterPro" id="IPR012337">
    <property type="entry name" value="RNaseH-like_sf"/>
</dbReference>
<dbReference type="InterPro" id="IPR036397">
    <property type="entry name" value="RNaseH_sf"/>
</dbReference>
<dbReference type="NCBIfam" id="NF003765">
    <property type="entry name" value="PRK05359.1"/>
    <property type="match status" value="1"/>
</dbReference>
<dbReference type="PANTHER" id="PTHR11046">
    <property type="entry name" value="OLIGORIBONUCLEASE, MITOCHONDRIAL"/>
    <property type="match status" value="1"/>
</dbReference>
<dbReference type="PANTHER" id="PTHR11046:SF0">
    <property type="entry name" value="OLIGORIBONUCLEASE, MITOCHONDRIAL"/>
    <property type="match status" value="1"/>
</dbReference>
<dbReference type="Pfam" id="PF00929">
    <property type="entry name" value="RNase_T"/>
    <property type="match status" value="1"/>
</dbReference>
<dbReference type="SMART" id="SM00479">
    <property type="entry name" value="EXOIII"/>
    <property type="match status" value="1"/>
</dbReference>
<dbReference type="SUPFAM" id="SSF53098">
    <property type="entry name" value="Ribonuclease H-like"/>
    <property type="match status" value="1"/>
</dbReference>
<comment type="function">
    <text evidence="2">3'-to-5' exoribonuclease specific for small oligoribonucleotides.</text>
</comment>
<comment type="subunit">
    <text evidence="2">Homodimer.</text>
</comment>
<comment type="subcellular location">
    <subcellularLocation>
        <location evidence="2">Cytoplasm</location>
    </subcellularLocation>
</comment>
<comment type="similarity">
    <text evidence="2">Belongs to the oligoribonuclease family.</text>
</comment>
<comment type="sequence caution" evidence="3">
    <conflict type="erroneous initiation">
        <sequence resource="EMBL-CDS" id="AAN83671"/>
    </conflict>
</comment>
<sequence length="181" mass="20816">MSANENNLIWIDLEMTGLDPERDRIIEIATLVTDANLNILAEGPTIAVHQSDEQLALMDDWNVRTHTASGLVERVKASTMGDREAELATLEFLKQWVPAGKSPICGNSIGQDRRFLFKYMPELEAYFHYRYLDVSTLKELARRWKPEILDGFTKQGTHQAMDDIRESVAELAYYREHFIKL</sequence>
<protein>
    <recommendedName>
        <fullName evidence="2">Oligoribonuclease</fullName>
        <ecNumber evidence="2">3.1.15.-</ecNumber>
    </recommendedName>
</protein>
<evidence type="ECO:0000250" key="1"/>
<evidence type="ECO:0000255" key="2">
    <source>
        <dbReference type="HAMAP-Rule" id="MF_00045"/>
    </source>
</evidence>
<evidence type="ECO:0000305" key="3"/>
<name>ORN_ECOL6</name>
<keyword id="KW-0963">Cytoplasm</keyword>
<keyword id="KW-0269">Exonuclease</keyword>
<keyword id="KW-0378">Hydrolase</keyword>
<keyword id="KW-0540">Nuclease</keyword>
<keyword id="KW-1185">Reference proteome</keyword>
<proteinExistence type="inferred from homology"/>
<accession>P0A785</accession>
<accession>P39287</accession>
<accession>P76799</accession>
<feature type="initiator methionine" description="Removed" evidence="1">
    <location>
        <position position="1"/>
    </location>
</feature>
<feature type="chain" id="PRO_0000111035" description="Oligoribonuclease">
    <location>
        <begin position="2"/>
        <end position="181"/>
    </location>
</feature>
<feature type="domain" description="Exonuclease" evidence="2">
    <location>
        <begin position="8"/>
        <end position="171"/>
    </location>
</feature>
<feature type="active site" evidence="2">
    <location>
        <position position="129"/>
    </location>
</feature>
<reference key="1">
    <citation type="journal article" date="2002" name="Proc. Natl. Acad. Sci. U.S.A.">
        <title>Extensive mosaic structure revealed by the complete genome sequence of uropathogenic Escherichia coli.</title>
        <authorList>
            <person name="Welch R.A."/>
            <person name="Burland V."/>
            <person name="Plunkett G. III"/>
            <person name="Redford P."/>
            <person name="Roesch P."/>
            <person name="Rasko D."/>
            <person name="Buckles E.L."/>
            <person name="Liou S.-R."/>
            <person name="Boutin A."/>
            <person name="Hackett J."/>
            <person name="Stroud D."/>
            <person name="Mayhew G.F."/>
            <person name="Rose D.J."/>
            <person name="Zhou S."/>
            <person name="Schwartz D.C."/>
            <person name="Perna N.T."/>
            <person name="Mobley H.L.T."/>
            <person name="Donnenberg M.S."/>
            <person name="Blattner F.R."/>
        </authorList>
    </citation>
    <scope>NUCLEOTIDE SEQUENCE [LARGE SCALE GENOMIC DNA]</scope>
    <source>
        <strain>CFT073 / ATCC 700928 / UPEC</strain>
    </source>
</reference>